<accession>P57064</accession>
<accession>A1ISA5</accession>
<sequence length="218" mass="23835">MNRQKVIAIDGPGASGKGTVAARVAAALGYDYLDTGALYRLTALYAQKQGVGWHDEENVSELAKKLPAVFSDSRILLGGEDVSDGIRTEAIGMGASAVAQLPKVRASLLQRQRDFLTEKGLVADGRDTGSVVFPQAELKIFLTAESKIRAERRAKQIGIPCEGLAFERILSDIEARDEADRNRKVAPLKQQPDALLLDTSRLTIEETVKKVLDWYRKV</sequence>
<keyword id="KW-0067">ATP-binding</keyword>
<keyword id="KW-0963">Cytoplasm</keyword>
<keyword id="KW-0418">Kinase</keyword>
<keyword id="KW-0547">Nucleotide-binding</keyword>
<keyword id="KW-0808">Transferase</keyword>
<evidence type="ECO:0000255" key="1">
    <source>
        <dbReference type="HAMAP-Rule" id="MF_00238"/>
    </source>
</evidence>
<organism>
    <name type="scientific">Neisseria meningitidis serogroup A / serotype 4A (strain DSM 15465 / Z2491)</name>
    <dbReference type="NCBI Taxonomy" id="122587"/>
    <lineage>
        <taxon>Bacteria</taxon>
        <taxon>Pseudomonadati</taxon>
        <taxon>Pseudomonadota</taxon>
        <taxon>Betaproteobacteria</taxon>
        <taxon>Neisseriales</taxon>
        <taxon>Neisseriaceae</taxon>
        <taxon>Neisseria</taxon>
    </lineage>
</organism>
<feature type="chain" id="PRO_0000131944" description="Cytidylate kinase">
    <location>
        <begin position="1"/>
        <end position="218"/>
    </location>
</feature>
<feature type="binding site" evidence="1">
    <location>
        <begin position="11"/>
        <end position="19"/>
    </location>
    <ligand>
        <name>ATP</name>
        <dbReference type="ChEBI" id="CHEBI:30616"/>
    </ligand>
</feature>
<comment type="catalytic activity">
    <reaction evidence="1">
        <text>CMP + ATP = CDP + ADP</text>
        <dbReference type="Rhea" id="RHEA:11600"/>
        <dbReference type="ChEBI" id="CHEBI:30616"/>
        <dbReference type="ChEBI" id="CHEBI:58069"/>
        <dbReference type="ChEBI" id="CHEBI:60377"/>
        <dbReference type="ChEBI" id="CHEBI:456216"/>
        <dbReference type="EC" id="2.7.4.25"/>
    </reaction>
</comment>
<comment type="catalytic activity">
    <reaction evidence="1">
        <text>dCMP + ATP = dCDP + ADP</text>
        <dbReference type="Rhea" id="RHEA:25094"/>
        <dbReference type="ChEBI" id="CHEBI:30616"/>
        <dbReference type="ChEBI" id="CHEBI:57566"/>
        <dbReference type="ChEBI" id="CHEBI:58593"/>
        <dbReference type="ChEBI" id="CHEBI:456216"/>
        <dbReference type="EC" id="2.7.4.25"/>
    </reaction>
</comment>
<comment type="subcellular location">
    <subcellularLocation>
        <location evidence="1">Cytoplasm</location>
    </subcellularLocation>
</comment>
<comment type="similarity">
    <text evidence="1">Belongs to the cytidylate kinase family. Type 1 subfamily.</text>
</comment>
<proteinExistence type="inferred from homology"/>
<gene>
    <name evidence="1" type="primary">cmk</name>
    <name type="ordered locus">NMA1514</name>
</gene>
<dbReference type="EC" id="2.7.4.25" evidence="1"/>
<dbReference type="EMBL" id="AL157959">
    <property type="protein sequence ID" value="CAM08661.1"/>
    <property type="molecule type" value="Genomic_DNA"/>
</dbReference>
<dbReference type="PIR" id="F81842">
    <property type="entry name" value="F81842"/>
</dbReference>
<dbReference type="RefSeq" id="WP_002243579.1">
    <property type="nucleotide sequence ID" value="NC_003116.1"/>
</dbReference>
<dbReference type="SMR" id="P57064"/>
<dbReference type="EnsemblBacteria" id="CAM08661">
    <property type="protein sequence ID" value="CAM08661"/>
    <property type="gene ID" value="NMA1514"/>
</dbReference>
<dbReference type="GeneID" id="93385899"/>
<dbReference type="KEGG" id="nma:NMA1514"/>
<dbReference type="HOGENOM" id="CLU_079959_2_0_4"/>
<dbReference type="Proteomes" id="UP000000626">
    <property type="component" value="Chromosome"/>
</dbReference>
<dbReference type="GO" id="GO:0005829">
    <property type="term" value="C:cytosol"/>
    <property type="evidence" value="ECO:0007669"/>
    <property type="project" value="TreeGrafter"/>
</dbReference>
<dbReference type="GO" id="GO:0005524">
    <property type="term" value="F:ATP binding"/>
    <property type="evidence" value="ECO:0007669"/>
    <property type="project" value="UniProtKB-UniRule"/>
</dbReference>
<dbReference type="GO" id="GO:0036430">
    <property type="term" value="F:CMP kinase activity"/>
    <property type="evidence" value="ECO:0007669"/>
    <property type="project" value="RHEA"/>
</dbReference>
<dbReference type="GO" id="GO:0036431">
    <property type="term" value="F:dCMP kinase activity"/>
    <property type="evidence" value="ECO:0007669"/>
    <property type="project" value="RHEA"/>
</dbReference>
<dbReference type="GO" id="GO:0015949">
    <property type="term" value="P:nucleobase-containing small molecule interconversion"/>
    <property type="evidence" value="ECO:0007669"/>
    <property type="project" value="TreeGrafter"/>
</dbReference>
<dbReference type="GO" id="GO:0006220">
    <property type="term" value="P:pyrimidine nucleotide metabolic process"/>
    <property type="evidence" value="ECO:0007669"/>
    <property type="project" value="UniProtKB-UniRule"/>
</dbReference>
<dbReference type="CDD" id="cd02020">
    <property type="entry name" value="CMPK"/>
    <property type="match status" value="1"/>
</dbReference>
<dbReference type="FunFam" id="3.40.50.300:FF:002405">
    <property type="entry name" value="Cytidylate kinase"/>
    <property type="match status" value="1"/>
</dbReference>
<dbReference type="Gene3D" id="3.40.50.300">
    <property type="entry name" value="P-loop containing nucleotide triphosphate hydrolases"/>
    <property type="match status" value="1"/>
</dbReference>
<dbReference type="HAMAP" id="MF_00238">
    <property type="entry name" value="Cytidyl_kinase_type1"/>
    <property type="match status" value="1"/>
</dbReference>
<dbReference type="InterPro" id="IPR003136">
    <property type="entry name" value="Cytidylate_kin"/>
</dbReference>
<dbReference type="InterPro" id="IPR011994">
    <property type="entry name" value="Cytidylate_kinase_dom"/>
</dbReference>
<dbReference type="InterPro" id="IPR027417">
    <property type="entry name" value="P-loop_NTPase"/>
</dbReference>
<dbReference type="NCBIfam" id="TIGR00017">
    <property type="entry name" value="cmk"/>
    <property type="match status" value="1"/>
</dbReference>
<dbReference type="PANTHER" id="PTHR21299:SF2">
    <property type="entry name" value="CYTIDYLATE KINASE"/>
    <property type="match status" value="1"/>
</dbReference>
<dbReference type="PANTHER" id="PTHR21299">
    <property type="entry name" value="CYTIDYLATE KINASE/PANTOATE-BETA-ALANINE LIGASE"/>
    <property type="match status" value="1"/>
</dbReference>
<dbReference type="Pfam" id="PF02224">
    <property type="entry name" value="Cytidylate_kin"/>
    <property type="match status" value="1"/>
</dbReference>
<dbReference type="SUPFAM" id="SSF52540">
    <property type="entry name" value="P-loop containing nucleoside triphosphate hydrolases"/>
    <property type="match status" value="1"/>
</dbReference>
<protein>
    <recommendedName>
        <fullName evidence="1">Cytidylate kinase</fullName>
        <shortName evidence="1">CK</shortName>
        <ecNumber evidence="1">2.7.4.25</ecNumber>
    </recommendedName>
    <alternativeName>
        <fullName evidence="1">Cytidine monophosphate kinase</fullName>
        <shortName evidence="1">CMP kinase</shortName>
    </alternativeName>
</protein>
<reference key="1">
    <citation type="journal article" date="2000" name="Nature">
        <title>Complete DNA sequence of a serogroup A strain of Neisseria meningitidis Z2491.</title>
        <authorList>
            <person name="Parkhill J."/>
            <person name="Achtman M."/>
            <person name="James K.D."/>
            <person name="Bentley S.D."/>
            <person name="Churcher C.M."/>
            <person name="Klee S.R."/>
            <person name="Morelli G."/>
            <person name="Basham D."/>
            <person name="Brown D."/>
            <person name="Chillingworth T."/>
            <person name="Davies R.M."/>
            <person name="Davis P."/>
            <person name="Devlin K."/>
            <person name="Feltwell T."/>
            <person name="Hamlin N."/>
            <person name="Holroyd S."/>
            <person name="Jagels K."/>
            <person name="Leather S."/>
            <person name="Moule S."/>
            <person name="Mungall K.L."/>
            <person name="Quail M.A."/>
            <person name="Rajandream M.A."/>
            <person name="Rutherford K.M."/>
            <person name="Simmonds M."/>
            <person name="Skelton J."/>
            <person name="Whitehead S."/>
            <person name="Spratt B.G."/>
            <person name="Barrell B.G."/>
        </authorList>
    </citation>
    <scope>NUCLEOTIDE SEQUENCE [LARGE SCALE GENOMIC DNA]</scope>
    <source>
        <strain>DSM 15465 / Z2491</strain>
    </source>
</reference>
<name>KCY_NEIMA</name>